<gene>
    <name type="primary">Arhgap19</name>
</gene>
<comment type="function">
    <text evidence="1">GTPase activator for the Rho-type GTPases by converting them to an inactive GDP-bound state.</text>
</comment>
<comment type="alternative products">
    <event type="alternative splicing"/>
    <isoform>
        <id>Q8BRH3-1</id>
        <name>1</name>
        <sequence type="displayed"/>
    </isoform>
    <isoform>
        <id>Q8BRH3-2</id>
        <name>2</name>
        <sequence type="described" ref="VSP_023702"/>
    </isoform>
</comment>
<comment type="sequence caution" evidence="6">
    <conflict type="erroneous initiation">
        <sequence resource="EMBL-CDS" id="AAH86680"/>
    </conflict>
</comment>
<reference key="1">
    <citation type="journal article" date="2005" name="Science">
        <title>The transcriptional landscape of the mammalian genome.</title>
        <authorList>
            <person name="Carninci P."/>
            <person name="Kasukawa T."/>
            <person name="Katayama S."/>
            <person name="Gough J."/>
            <person name="Frith M.C."/>
            <person name="Maeda N."/>
            <person name="Oyama R."/>
            <person name="Ravasi T."/>
            <person name="Lenhard B."/>
            <person name="Wells C."/>
            <person name="Kodzius R."/>
            <person name="Shimokawa K."/>
            <person name="Bajic V.B."/>
            <person name="Brenner S.E."/>
            <person name="Batalov S."/>
            <person name="Forrest A.R."/>
            <person name="Zavolan M."/>
            <person name="Davis M.J."/>
            <person name="Wilming L.G."/>
            <person name="Aidinis V."/>
            <person name="Allen J.E."/>
            <person name="Ambesi-Impiombato A."/>
            <person name="Apweiler R."/>
            <person name="Aturaliya R.N."/>
            <person name="Bailey T.L."/>
            <person name="Bansal M."/>
            <person name="Baxter L."/>
            <person name="Beisel K.W."/>
            <person name="Bersano T."/>
            <person name="Bono H."/>
            <person name="Chalk A.M."/>
            <person name="Chiu K.P."/>
            <person name="Choudhary V."/>
            <person name="Christoffels A."/>
            <person name="Clutterbuck D.R."/>
            <person name="Crowe M.L."/>
            <person name="Dalla E."/>
            <person name="Dalrymple B.P."/>
            <person name="de Bono B."/>
            <person name="Della Gatta G."/>
            <person name="di Bernardo D."/>
            <person name="Down T."/>
            <person name="Engstrom P."/>
            <person name="Fagiolini M."/>
            <person name="Faulkner G."/>
            <person name="Fletcher C.F."/>
            <person name="Fukushima T."/>
            <person name="Furuno M."/>
            <person name="Futaki S."/>
            <person name="Gariboldi M."/>
            <person name="Georgii-Hemming P."/>
            <person name="Gingeras T.R."/>
            <person name="Gojobori T."/>
            <person name="Green R.E."/>
            <person name="Gustincich S."/>
            <person name="Harbers M."/>
            <person name="Hayashi Y."/>
            <person name="Hensch T.K."/>
            <person name="Hirokawa N."/>
            <person name="Hill D."/>
            <person name="Huminiecki L."/>
            <person name="Iacono M."/>
            <person name="Ikeo K."/>
            <person name="Iwama A."/>
            <person name="Ishikawa T."/>
            <person name="Jakt M."/>
            <person name="Kanapin A."/>
            <person name="Katoh M."/>
            <person name="Kawasawa Y."/>
            <person name="Kelso J."/>
            <person name="Kitamura H."/>
            <person name="Kitano H."/>
            <person name="Kollias G."/>
            <person name="Krishnan S.P."/>
            <person name="Kruger A."/>
            <person name="Kummerfeld S.K."/>
            <person name="Kurochkin I.V."/>
            <person name="Lareau L.F."/>
            <person name="Lazarevic D."/>
            <person name="Lipovich L."/>
            <person name="Liu J."/>
            <person name="Liuni S."/>
            <person name="McWilliam S."/>
            <person name="Madan Babu M."/>
            <person name="Madera M."/>
            <person name="Marchionni L."/>
            <person name="Matsuda H."/>
            <person name="Matsuzawa S."/>
            <person name="Miki H."/>
            <person name="Mignone F."/>
            <person name="Miyake S."/>
            <person name="Morris K."/>
            <person name="Mottagui-Tabar S."/>
            <person name="Mulder N."/>
            <person name="Nakano N."/>
            <person name="Nakauchi H."/>
            <person name="Ng P."/>
            <person name="Nilsson R."/>
            <person name="Nishiguchi S."/>
            <person name="Nishikawa S."/>
            <person name="Nori F."/>
            <person name="Ohara O."/>
            <person name="Okazaki Y."/>
            <person name="Orlando V."/>
            <person name="Pang K.C."/>
            <person name="Pavan W.J."/>
            <person name="Pavesi G."/>
            <person name="Pesole G."/>
            <person name="Petrovsky N."/>
            <person name="Piazza S."/>
            <person name="Reed J."/>
            <person name="Reid J.F."/>
            <person name="Ring B.Z."/>
            <person name="Ringwald M."/>
            <person name="Rost B."/>
            <person name="Ruan Y."/>
            <person name="Salzberg S.L."/>
            <person name="Sandelin A."/>
            <person name="Schneider C."/>
            <person name="Schoenbach C."/>
            <person name="Sekiguchi K."/>
            <person name="Semple C.A."/>
            <person name="Seno S."/>
            <person name="Sessa L."/>
            <person name="Sheng Y."/>
            <person name="Shibata Y."/>
            <person name="Shimada H."/>
            <person name="Shimada K."/>
            <person name="Silva D."/>
            <person name="Sinclair B."/>
            <person name="Sperling S."/>
            <person name="Stupka E."/>
            <person name="Sugiura K."/>
            <person name="Sultana R."/>
            <person name="Takenaka Y."/>
            <person name="Taki K."/>
            <person name="Tammoja K."/>
            <person name="Tan S.L."/>
            <person name="Tang S."/>
            <person name="Taylor M.S."/>
            <person name="Tegner J."/>
            <person name="Teichmann S.A."/>
            <person name="Ueda H.R."/>
            <person name="van Nimwegen E."/>
            <person name="Verardo R."/>
            <person name="Wei C.L."/>
            <person name="Yagi K."/>
            <person name="Yamanishi H."/>
            <person name="Zabarovsky E."/>
            <person name="Zhu S."/>
            <person name="Zimmer A."/>
            <person name="Hide W."/>
            <person name="Bult C."/>
            <person name="Grimmond S.M."/>
            <person name="Teasdale R.D."/>
            <person name="Liu E.T."/>
            <person name="Brusic V."/>
            <person name="Quackenbush J."/>
            <person name="Wahlestedt C."/>
            <person name="Mattick J.S."/>
            <person name="Hume D.A."/>
            <person name="Kai C."/>
            <person name="Sasaki D."/>
            <person name="Tomaru Y."/>
            <person name="Fukuda S."/>
            <person name="Kanamori-Katayama M."/>
            <person name="Suzuki M."/>
            <person name="Aoki J."/>
            <person name="Arakawa T."/>
            <person name="Iida J."/>
            <person name="Imamura K."/>
            <person name="Itoh M."/>
            <person name="Kato T."/>
            <person name="Kawaji H."/>
            <person name="Kawagashira N."/>
            <person name="Kawashima T."/>
            <person name="Kojima M."/>
            <person name="Kondo S."/>
            <person name="Konno H."/>
            <person name="Nakano K."/>
            <person name="Ninomiya N."/>
            <person name="Nishio T."/>
            <person name="Okada M."/>
            <person name="Plessy C."/>
            <person name="Shibata K."/>
            <person name="Shiraki T."/>
            <person name="Suzuki S."/>
            <person name="Tagami M."/>
            <person name="Waki K."/>
            <person name="Watahiki A."/>
            <person name="Okamura-Oho Y."/>
            <person name="Suzuki H."/>
            <person name="Kawai J."/>
            <person name="Hayashizaki Y."/>
        </authorList>
    </citation>
    <scope>NUCLEOTIDE SEQUENCE [LARGE SCALE MRNA] (ISOFORMS 1 AND 2)</scope>
    <source>
        <strain>C57BL/6J</strain>
        <tissue>Embryo</tissue>
        <tissue>Testis</tissue>
    </source>
</reference>
<reference key="2">
    <citation type="journal article" date="2004" name="Genome Res.">
        <title>The status, quality, and expansion of the NIH full-length cDNA project: the Mammalian Gene Collection (MGC).</title>
        <authorList>
            <consortium name="The MGC Project Team"/>
        </authorList>
    </citation>
    <scope>NUCLEOTIDE SEQUENCE [LARGE SCALE MRNA] (ISOFORM 1)</scope>
    <source>
        <strain>C57BL/6J</strain>
        <tissue>Brain</tissue>
        <tissue>Head</tissue>
    </source>
</reference>
<reference key="3">
    <citation type="journal article" date="2004" name="DNA Res.">
        <title>Prediction of the coding sequences of mouse homologues of FLJ genes: the complete nucleotide sequences of 110 mouse FLJ-homologous cDNAs identified by screening of terminal sequences of cDNA clones randomly sampled from size-fractionated libraries.</title>
        <authorList>
            <person name="Okazaki N."/>
            <person name="Kikuno R."/>
            <person name="Ohara R."/>
            <person name="Inamoto S."/>
            <person name="Koseki H."/>
            <person name="Hiraoka S."/>
            <person name="Saga Y."/>
            <person name="Kitamura H."/>
            <person name="Nakagawa T."/>
            <person name="Nagase T."/>
            <person name="Ohara O."/>
            <person name="Koga H."/>
        </authorList>
    </citation>
    <scope>NUCLEOTIDE SEQUENCE [LARGE SCALE MRNA] OF 4-494 (ISOFORM 1)</scope>
    <source>
        <tissue>Fetal brain</tissue>
    </source>
</reference>
<reference key="4">
    <citation type="journal article" date="2010" name="Cell">
        <title>A tissue-specific atlas of mouse protein phosphorylation and expression.</title>
        <authorList>
            <person name="Huttlin E.L."/>
            <person name="Jedrychowski M.P."/>
            <person name="Elias J.E."/>
            <person name="Goswami T."/>
            <person name="Rad R."/>
            <person name="Beausoleil S.A."/>
            <person name="Villen J."/>
            <person name="Haas W."/>
            <person name="Sowa M.E."/>
            <person name="Gygi S.P."/>
        </authorList>
    </citation>
    <scope>PHOSPHORYLATION [LARGE SCALE ANALYSIS] AT SER-31</scope>
    <scope>IDENTIFICATION BY MASS SPECTROMETRY [LARGE SCALE ANALYSIS]</scope>
    <source>
        <tissue>Spleen</tissue>
        <tissue>Testis</tissue>
    </source>
</reference>
<feature type="initiator methionine" description="Removed" evidence="2">
    <location>
        <position position="1"/>
    </location>
</feature>
<feature type="chain" id="PRO_0000280466" description="Rho GTPase-activating protein 19">
    <location>
        <begin position="2"/>
        <end position="494"/>
    </location>
</feature>
<feature type="domain" description="Rho-GAP" evidence="3">
    <location>
        <begin position="102"/>
        <end position="308"/>
    </location>
</feature>
<feature type="region of interest" description="Disordered" evidence="4">
    <location>
        <begin position="399"/>
        <end position="451"/>
    </location>
</feature>
<feature type="site" description="Arginine finger; crucial for GTP hydrolysis by stabilizing the transition state" evidence="3">
    <location>
        <position position="143"/>
    </location>
</feature>
<feature type="modified residue" description="N-acetylalanine" evidence="2">
    <location>
        <position position="2"/>
    </location>
</feature>
<feature type="modified residue" description="Phosphoserine" evidence="2">
    <location>
        <position position="7"/>
    </location>
</feature>
<feature type="modified residue" description="Phosphoserine" evidence="7">
    <location>
        <position position="31"/>
    </location>
</feature>
<feature type="modified residue" description="Phosphoserine" evidence="2">
    <location>
        <position position="422"/>
    </location>
</feature>
<feature type="modified residue" description="Phosphoserine" evidence="2">
    <location>
        <position position="438"/>
    </location>
</feature>
<feature type="modified residue" description="Phosphoserine" evidence="2">
    <location>
        <position position="470"/>
    </location>
</feature>
<feature type="modified residue" description="Phosphothreonine" evidence="2">
    <location>
        <position position="478"/>
    </location>
</feature>
<feature type="splice variant" id="VSP_023702" description="In isoform 2." evidence="5">
    <location>
        <begin position="332"/>
        <end position="346"/>
    </location>
</feature>
<feature type="sequence conflict" description="In Ref. 1; BAC32114." evidence="6" ref="1">
    <original>R</original>
    <variation>G</variation>
    <location>
        <position position="490"/>
    </location>
</feature>
<evidence type="ECO:0000250" key="1"/>
<evidence type="ECO:0000250" key="2">
    <source>
        <dbReference type="UniProtKB" id="Q14CB8"/>
    </source>
</evidence>
<evidence type="ECO:0000255" key="3">
    <source>
        <dbReference type="PROSITE-ProRule" id="PRU00172"/>
    </source>
</evidence>
<evidence type="ECO:0000256" key="4">
    <source>
        <dbReference type="SAM" id="MobiDB-lite"/>
    </source>
</evidence>
<evidence type="ECO:0000303" key="5">
    <source>
    </source>
</evidence>
<evidence type="ECO:0000305" key="6"/>
<evidence type="ECO:0007744" key="7">
    <source>
    </source>
</evidence>
<accession>Q8BRH3</accession>
<accession>B9EI55</accession>
<accession>Q0VGS7</accession>
<accession>Q5DU53</accession>
<accession>Q9D468</accession>
<keyword id="KW-0007">Acetylation</keyword>
<keyword id="KW-0025">Alternative splicing</keyword>
<keyword id="KW-0343">GTPase activation</keyword>
<keyword id="KW-0597">Phosphoprotein</keyword>
<keyword id="KW-1185">Reference proteome</keyword>
<dbReference type="EMBL" id="AK016763">
    <property type="protein sequence ID" value="BAB30415.1"/>
    <property type="molecule type" value="mRNA"/>
</dbReference>
<dbReference type="EMBL" id="AK044841">
    <property type="protein sequence ID" value="BAC32114.1"/>
    <property type="molecule type" value="mRNA"/>
</dbReference>
<dbReference type="EMBL" id="BC086680">
    <property type="protein sequence ID" value="AAH86680.1"/>
    <property type="status" value="ALT_INIT"/>
    <property type="molecule type" value="mRNA"/>
</dbReference>
<dbReference type="EMBL" id="BC139195">
    <property type="protein sequence ID" value="AAI39196.1"/>
    <property type="molecule type" value="mRNA"/>
</dbReference>
<dbReference type="EMBL" id="AK220317">
    <property type="protein sequence ID" value="BAD90233.1"/>
    <property type="molecule type" value="mRNA"/>
</dbReference>
<dbReference type="CCDS" id="CCDS37989.1">
    <molecule id="Q8BRH3-1"/>
</dbReference>
<dbReference type="RefSeq" id="NP_001156967.1">
    <property type="nucleotide sequence ID" value="NM_001163495.1"/>
</dbReference>
<dbReference type="RefSeq" id="NP_081943.2">
    <molecule id="Q8BRH3-1"/>
    <property type="nucleotide sequence ID" value="NM_027667.3"/>
</dbReference>
<dbReference type="SMR" id="Q8BRH3"/>
<dbReference type="BioGRID" id="214464">
    <property type="interactions" value="10"/>
</dbReference>
<dbReference type="FunCoup" id="Q8BRH3">
    <property type="interactions" value="3131"/>
</dbReference>
<dbReference type="STRING" id="10090.ENSMUSP00000026150"/>
<dbReference type="iPTMnet" id="Q8BRH3"/>
<dbReference type="PhosphoSitePlus" id="Q8BRH3"/>
<dbReference type="jPOST" id="Q8BRH3"/>
<dbReference type="PaxDb" id="10090-ENSMUSP00000026150"/>
<dbReference type="ProteomicsDB" id="254874">
    <molecule id="Q8BRH3-1"/>
</dbReference>
<dbReference type="ProteomicsDB" id="254875">
    <molecule id="Q8BRH3-2"/>
</dbReference>
<dbReference type="DNASU" id="71085"/>
<dbReference type="Ensembl" id="ENSMUST00000026150.15">
    <molecule id="Q8BRH3-1"/>
    <property type="protein sequence ID" value="ENSMUSP00000026150.9"/>
    <property type="gene ID" value="ENSMUSG00000025154.16"/>
</dbReference>
<dbReference type="Ensembl" id="ENSMUST00000177495.2">
    <molecule id="Q8BRH3-2"/>
    <property type="protein sequence ID" value="ENSMUSP00000135293.2"/>
    <property type="gene ID" value="ENSMUSG00000025154.16"/>
</dbReference>
<dbReference type="GeneID" id="71085"/>
<dbReference type="KEGG" id="mmu:71085"/>
<dbReference type="UCSC" id="uc008hmh.2">
    <molecule id="Q8BRH3-1"/>
    <property type="organism name" value="mouse"/>
</dbReference>
<dbReference type="UCSC" id="uc012blt.1">
    <molecule id="Q8BRH3-2"/>
    <property type="organism name" value="mouse"/>
</dbReference>
<dbReference type="AGR" id="MGI:1918335"/>
<dbReference type="CTD" id="84986"/>
<dbReference type="MGI" id="MGI:1918335">
    <property type="gene designation" value="Arhgap19"/>
</dbReference>
<dbReference type="VEuPathDB" id="HostDB:ENSMUSG00000025154"/>
<dbReference type="eggNOG" id="KOG1453">
    <property type="taxonomic scope" value="Eukaryota"/>
</dbReference>
<dbReference type="GeneTree" id="ENSGT00940000157331"/>
<dbReference type="HOGENOM" id="CLU_046228_0_0_1"/>
<dbReference type="InParanoid" id="Q8BRH3"/>
<dbReference type="OMA" id="CQSPANQ"/>
<dbReference type="OrthoDB" id="10061772at2759"/>
<dbReference type="PhylomeDB" id="Q8BRH3"/>
<dbReference type="TreeFam" id="TF326309"/>
<dbReference type="Reactome" id="R-MMU-8980692">
    <property type="pathway name" value="RHOA GTPase cycle"/>
</dbReference>
<dbReference type="BioGRID-ORCS" id="71085">
    <property type="hits" value="1 hit in 76 CRISPR screens"/>
</dbReference>
<dbReference type="ChiTaRS" id="Arhgap19">
    <property type="organism name" value="mouse"/>
</dbReference>
<dbReference type="PRO" id="PR:Q8BRH3"/>
<dbReference type="Proteomes" id="UP000000589">
    <property type="component" value="Chromosome 19"/>
</dbReference>
<dbReference type="RNAct" id="Q8BRH3">
    <property type="molecule type" value="protein"/>
</dbReference>
<dbReference type="Bgee" id="ENSMUSG00000025154">
    <property type="expression patterns" value="Expressed in otolith organ and 171 other cell types or tissues"/>
</dbReference>
<dbReference type="ExpressionAtlas" id="Q8BRH3">
    <property type="expression patterns" value="baseline and differential"/>
</dbReference>
<dbReference type="GO" id="GO:0043231">
    <property type="term" value="C:intracellular membrane-bounded organelle"/>
    <property type="evidence" value="ECO:0007669"/>
    <property type="project" value="Ensembl"/>
</dbReference>
<dbReference type="GO" id="GO:0005886">
    <property type="term" value="C:plasma membrane"/>
    <property type="evidence" value="ECO:0007669"/>
    <property type="project" value="Ensembl"/>
</dbReference>
<dbReference type="GO" id="GO:0005096">
    <property type="term" value="F:GTPase activator activity"/>
    <property type="evidence" value="ECO:0007669"/>
    <property type="project" value="UniProtKB-KW"/>
</dbReference>
<dbReference type="GO" id="GO:0007165">
    <property type="term" value="P:signal transduction"/>
    <property type="evidence" value="ECO:0007669"/>
    <property type="project" value="InterPro"/>
</dbReference>
<dbReference type="CDD" id="cd04392">
    <property type="entry name" value="RhoGAP_ARHGAP19"/>
    <property type="match status" value="1"/>
</dbReference>
<dbReference type="FunFam" id="1.10.555.10:FF:000022">
    <property type="entry name" value="rho GTPase-activating protein 19"/>
    <property type="match status" value="1"/>
</dbReference>
<dbReference type="Gene3D" id="1.10.555.10">
    <property type="entry name" value="Rho GTPase activation protein"/>
    <property type="match status" value="1"/>
</dbReference>
<dbReference type="InterPro" id="IPR047941">
    <property type="entry name" value="ARHGAP19_RhoGAP"/>
</dbReference>
<dbReference type="InterPro" id="IPR008936">
    <property type="entry name" value="Rho_GTPase_activation_prot"/>
</dbReference>
<dbReference type="InterPro" id="IPR000198">
    <property type="entry name" value="RhoGAP_dom"/>
</dbReference>
<dbReference type="PANTHER" id="PTHR14963">
    <property type="entry name" value="RHO GTPASE ACTIVATING PROTEIN 18,19-RELATED"/>
    <property type="match status" value="1"/>
</dbReference>
<dbReference type="PANTHER" id="PTHR14963:SF7">
    <property type="entry name" value="RHO GTPASE-ACTIVATING PROTEIN 19"/>
    <property type="match status" value="1"/>
</dbReference>
<dbReference type="Pfam" id="PF00620">
    <property type="entry name" value="RhoGAP"/>
    <property type="match status" value="1"/>
</dbReference>
<dbReference type="SMART" id="SM00324">
    <property type="entry name" value="RhoGAP"/>
    <property type="match status" value="1"/>
</dbReference>
<dbReference type="SUPFAM" id="SSF48350">
    <property type="entry name" value="GTPase activation domain, GAP"/>
    <property type="match status" value="1"/>
</dbReference>
<dbReference type="PROSITE" id="PS50238">
    <property type="entry name" value="RHOGAP"/>
    <property type="match status" value="1"/>
</dbReference>
<sequence length="494" mass="55734">MAAEAPSGGEAPVCDSGRSDAICNFVICNDSPLRGQPIIFNPDFFVEKLRHEKPEVFTELVVSNITRLIDLPGTELAQLMGEVDLKLPGGAGPAAGFFRSLMSLKRKEKGVVFGSPLTEEGIAQIYQLIEYLHKNLRVEGLFRVPGNSVRQQLLRDALNNGTDIDLDSGEFHSNDVATLLKMFLGELPEPLLTHKHFHVHLKIADLMQFDDKGNKTNIPDKERQIEALQLLFLILPPANRNLLKLLLDLLYQTAKKQDKNKMSAHNLALMFAPHVLWPKNVTANDLQENIIKLNTGMAFMIKHSQKLFKAPAYIRECARLYYLGSRTQMSKDDLDLTTSCHNMSFQLARCQRQNRVDPSSQQEETQQHTEEALRELFQHVHNWPDSAKKKQLLRQFHKQSLTQTPGREPSTPRVQKRARSRSFSGLIKRKVLGSQMTSEKKNSSPAPESVAMGELKKASKENMNLFFSGSPAGTVTPTRLKWSEAKREGRKGFF</sequence>
<proteinExistence type="evidence at protein level"/>
<name>RHG19_MOUSE</name>
<organism>
    <name type="scientific">Mus musculus</name>
    <name type="common">Mouse</name>
    <dbReference type="NCBI Taxonomy" id="10090"/>
    <lineage>
        <taxon>Eukaryota</taxon>
        <taxon>Metazoa</taxon>
        <taxon>Chordata</taxon>
        <taxon>Craniata</taxon>
        <taxon>Vertebrata</taxon>
        <taxon>Euteleostomi</taxon>
        <taxon>Mammalia</taxon>
        <taxon>Eutheria</taxon>
        <taxon>Euarchontoglires</taxon>
        <taxon>Glires</taxon>
        <taxon>Rodentia</taxon>
        <taxon>Myomorpha</taxon>
        <taxon>Muroidea</taxon>
        <taxon>Muridae</taxon>
        <taxon>Murinae</taxon>
        <taxon>Mus</taxon>
        <taxon>Mus</taxon>
    </lineage>
</organism>
<protein>
    <recommendedName>
        <fullName>Rho GTPase-activating protein 19</fullName>
    </recommendedName>
    <alternativeName>
        <fullName>Rho-type GTPase-activating protein 19</fullName>
    </alternativeName>
</protein>